<name>GLGC_KLEP3</name>
<protein>
    <recommendedName>
        <fullName evidence="1">Glucose-1-phosphate adenylyltransferase</fullName>
        <ecNumber evidence="1">2.7.7.27</ecNumber>
    </recommendedName>
    <alternativeName>
        <fullName evidence="1">ADP-glucose pyrophosphorylase</fullName>
        <shortName evidence="1">ADPGlc PPase</shortName>
    </alternativeName>
    <alternativeName>
        <fullName evidence="1">ADP-glucose synthase</fullName>
    </alternativeName>
</protein>
<proteinExistence type="inferred from homology"/>
<accession>B5XTQ9</accession>
<evidence type="ECO:0000255" key="1">
    <source>
        <dbReference type="HAMAP-Rule" id="MF_00624"/>
    </source>
</evidence>
<organism>
    <name type="scientific">Klebsiella pneumoniae (strain 342)</name>
    <dbReference type="NCBI Taxonomy" id="507522"/>
    <lineage>
        <taxon>Bacteria</taxon>
        <taxon>Pseudomonadati</taxon>
        <taxon>Pseudomonadota</taxon>
        <taxon>Gammaproteobacteria</taxon>
        <taxon>Enterobacterales</taxon>
        <taxon>Enterobacteriaceae</taxon>
        <taxon>Klebsiella/Raoultella group</taxon>
        <taxon>Klebsiella</taxon>
        <taxon>Klebsiella pneumoniae complex</taxon>
    </lineage>
</organism>
<sequence length="431" mass="48604">MVRLEKNDPLMLARQLPIKSVALILAGGRGTRLKDLTIKRAKPAVHFGGKFRIIDFALSNCINSGIRRIGVITQYQSHTLVQHIQRGWSFFSEEMNEFVDLLPAQQRVHGENWYRGTADAVTQNLDIIRRYKAEYVVILAGDHIYKQDYSRMLIDHVEKGARCTVACMPVPIEEASAFGVMAVDENEKIIEFVEKPANPPAMPTDPTKSLASMGIYIFDAAYLYELLEEDDRNENSSHDFGKDIIPKITEAGMAYAHPFPLSCVQSDPNAEPYWRDVGTLEAYWKANLDLASVTPELDMYDQNWPIRTHMESLPPAKFVQDRSGSHGMTLNSLVSGGCIISGSVVVQSVLFPRVRVNSFCNIDSAVLLPDVWVGRSCRLRRCVIDRACVIPEGMVIGENAEEDARRFYRSEEGIVLVTRDMLRKLGHKQER</sequence>
<dbReference type="EC" id="2.7.7.27" evidence="1"/>
<dbReference type="EMBL" id="CP000964">
    <property type="protein sequence ID" value="ACI07525.1"/>
    <property type="molecule type" value="Genomic_DNA"/>
</dbReference>
<dbReference type="SMR" id="B5XTQ9"/>
<dbReference type="KEGG" id="kpe:KPK_0318"/>
<dbReference type="HOGENOM" id="CLU_029499_14_1_6"/>
<dbReference type="UniPathway" id="UPA00164"/>
<dbReference type="Proteomes" id="UP000001734">
    <property type="component" value="Chromosome"/>
</dbReference>
<dbReference type="GO" id="GO:0005524">
    <property type="term" value="F:ATP binding"/>
    <property type="evidence" value="ECO:0007669"/>
    <property type="project" value="UniProtKB-KW"/>
</dbReference>
<dbReference type="GO" id="GO:0008878">
    <property type="term" value="F:glucose-1-phosphate adenylyltransferase activity"/>
    <property type="evidence" value="ECO:0007669"/>
    <property type="project" value="UniProtKB-UniRule"/>
</dbReference>
<dbReference type="GO" id="GO:0005978">
    <property type="term" value="P:glycogen biosynthetic process"/>
    <property type="evidence" value="ECO:0007669"/>
    <property type="project" value="UniProtKB-UniRule"/>
</dbReference>
<dbReference type="CDD" id="cd02508">
    <property type="entry name" value="ADP_Glucose_PP"/>
    <property type="match status" value="1"/>
</dbReference>
<dbReference type="CDD" id="cd04651">
    <property type="entry name" value="LbH_G1P_AT_C"/>
    <property type="match status" value="1"/>
</dbReference>
<dbReference type="FunFam" id="2.160.10.10:FF:000006">
    <property type="entry name" value="Glucose-1-phosphate adenylyltransferase"/>
    <property type="match status" value="1"/>
</dbReference>
<dbReference type="FunFam" id="3.90.550.10:FF:000014">
    <property type="entry name" value="Glucose-1-phosphate adenylyltransferase"/>
    <property type="match status" value="1"/>
</dbReference>
<dbReference type="Gene3D" id="2.160.10.10">
    <property type="entry name" value="Hexapeptide repeat proteins"/>
    <property type="match status" value="1"/>
</dbReference>
<dbReference type="Gene3D" id="3.90.550.10">
    <property type="entry name" value="Spore Coat Polysaccharide Biosynthesis Protein SpsA, Chain A"/>
    <property type="match status" value="1"/>
</dbReference>
<dbReference type="HAMAP" id="MF_00624">
    <property type="entry name" value="GlgC"/>
    <property type="match status" value="1"/>
</dbReference>
<dbReference type="InterPro" id="IPR011831">
    <property type="entry name" value="ADP-Glc_PPase"/>
</dbReference>
<dbReference type="InterPro" id="IPR005836">
    <property type="entry name" value="ADP_Glu_pyroP_CS"/>
</dbReference>
<dbReference type="InterPro" id="IPR023049">
    <property type="entry name" value="GlgC_bac"/>
</dbReference>
<dbReference type="InterPro" id="IPR056818">
    <property type="entry name" value="GlmU/GlgC-like_hexapep"/>
</dbReference>
<dbReference type="InterPro" id="IPR005835">
    <property type="entry name" value="NTP_transferase_dom"/>
</dbReference>
<dbReference type="InterPro" id="IPR029044">
    <property type="entry name" value="Nucleotide-diphossugar_trans"/>
</dbReference>
<dbReference type="InterPro" id="IPR011004">
    <property type="entry name" value="Trimer_LpxA-like_sf"/>
</dbReference>
<dbReference type="NCBIfam" id="TIGR02091">
    <property type="entry name" value="glgC"/>
    <property type="match status" value="1"/>
</dbReference>
<dbReference type="NCBIfam" id="NF001947">
    <property type="entry name" value="PRK00725.1"/>
    <property type="match status" value="1"/>
</dbReference>
<dbReference type="NCBIfam" id="NF002023">
    <property type="entry name" value="PRK00844.1"/>
    <property type="match status" value="1"/>
</dbReference>
<dbReference type="PANTHER" id="PTHR43523:SF2">
    <property type="entry name" value="GLUCOSE-1-PHOSPHATE ADENYLYLTRANSFERASE"/>
    <property type="match status" value="1"/>
</dbReference>
<dbReference type="PANTHER" id="PTHR43523">
    <property type="entry name" value="GLUCOSE-1-PHOSPHATE ADENYLYLTRANSFERASE-RELATED"/>
    <property type="match status" value="1"/>
</dbReference>
<dbReference type="Pfam" id="PF24894">
    <property type="entry name" value="Hexapep_GlmU"/>
    <property type="match status" value="1"/>
</dbReference>
<dbReference type="Pfam" id="PF00483">
    <property type="entry name" value="NTP_transferase"/>
    <property type="match status" value="1"/>
</dbReference>
<dbReference type="SUPFAM" id="SSF53448">
    <property type="entry name" value="Nucleotide-diphospho-sugar transferases"/>
    <property type="match status" value="1"/>
</dbReference>
<dbReference type="SUPFAM" id="SSF51161">
    <property type="entry name" value="Trimeric LpxA-like enzymes"/>
    <property type="match status" value="1"/>
</dbReference>
<dbReference type="PROSITE" id="PS00808">
    <property type="entry name" value="ADP_GLC_PYROPHOSPH_1"/>
    <property type="match status" value="1"/>
</dbReference>
<dbReference type="PROSITE" id="PS00809">
    <property type="entry name" value="ADP_GLC_PYROPHOSPH_2"/>
    <property type="match status" value="1"/>
</dbReference>
<reference key="1">
    <citation type="journal article" date="2008" name="PLoS Genet.">
        <title>Complete genome sequence of the N2-fixing broad host range endophyte Klebsiella pneumoniae 342 and virulence predictions verified in mice.</title>
        <authorList>
            <person name="Fouts D.E."/>
            <person name="Tyler H.L."/>
            <person name="DeBoy R.T."/>
            <person name="Daugherty S."/>
            <person name="Ren Q."/>
            <person name="Badger J.H."/>
            <person name="Durkin A.S."/>
            <person name="Huot H."/>
            <person name="Shrivastava S."/>
            <person name="Kothari S."/>
            <person name="Dodson R.J."/>
            <person name="Mohamoud Y."/>
            <person name="Khouri H."/>
            <person name="Roesch L.F.W."/>
            <person name="Krogfelt K.A."/>
            <person name="Struve C."/>
            <person name="Triplett E.W."/>
            <person name="Methe B.A."/>
        </authorList>
    </citation>
    <scope>NUCLEOTIDE SEQUENCE [LARGE SCALE GENOMIC DNA]</scope>
    <source>
        <strain>342</strain>
    </source>
</reference>
<gene>
    <name evidence="1" type="primary">glgC</name>
    <name type="ordered locus">KPK_0318</name>
</gene>
<feature type="chain" id="PRO_1000130488" description="Glucose-1-phosphate adenylyltransferase">
    <location>
        <begin position="1"/>
        <end position="431"/>
    </location>
</feature>
<feature type="binding site" evidence="1">
    <location>
        <position position="39"/>
    </location>
    <ligand>
        <name>beta-D-fructose 1,6-bisphosphate</name>
        <dbReference type="ChEBI" id="CHEBI:32966"/>
    </ligand>
</feature>
<feature type="binding site" evidence="1">
    <location>
        <position position="40"/>
    </location>
    <ligand>
        <name>AMP</name>
        <dbReference type="ChEBI" id="CHEBI:456215"/>
    </ligand>
</feature>
<feature type="binding site" evidence="1">
    <location>
        <position position="46"/>
    </location>
    <ligand>
        <name>AMP</name>
        <dbReference type="ChEBI" id="CHEBI:456215"/>
    </ligand>
</feature>
<feature type="binding site" evidence="1">
    <location>
        <position position="52"/>
    </location>
    <ligand>
        <name>AMP</name>
        <dbReference type="ChEBI" id="CHEBI:456215"/>
    </ligand>
</feature>
<feature type="binding site" evidence="1">
    <location>
        <position position="114"/>
    </location>
    <ligand>
        <name>alpha-D-glucose 1-phosphate</name>
        <dbReference type="ChEBI" id="CHEBI:58601"/>
    </ligand>
</feature>
<feature type="binding site" evidence="1">
    <location>
        <position position="130"/>
    </location>
    <ligand>
        <name>AMP</name>
        <dbReference type="ChEBI" id="CHEBI:456215"/>
    </ligand>
</feature>
<feature type="binding site" evidence="1">
    <location>
        <position position="179"/>
    </location>
    <ligand>
        <name>alpha-D-glucose 1-phosphate</name>
        <dbReference type="ChEBI" id="CHEBI:58601"/>
    </ligand>
</feature>
<feature type="binding site" evidence="1">
    <location>
        <begin position="194"/>
        <end position="195"/>
    </location>
    <ligand>
        <name>alpha-D-glucose 1-phosphate</name>
        <dbReference type="ChEBI" id="CHEBI:58601"/>
    </ligand>
</feature>
<feature type="binding site" evidence="1">
    <location>
        <position position="212"/>
    </location>
    <ligand>
        <name>alpha-D-glucose 1-phosphate</name>
        <dbReference type="ChEBI" id="CHEBI:58601"/>
    </ligand>
</feature>
<feature type="binding site" evidence="1">
    <location>
        <position position="386"/>
    </location>
    <ligand>
        <name>AMP</name>
        <dbReference type="ChEBI" id="CHEBI:456215"/>
    </ligand>
</feature>
<feature type="binding site" evidence="1">
    <location>
        <begin position="429"/>
        <end position="431"/>
    </location>
    <ligand>
        <name>beta-D-fructose 1,6-bisphosphate</name>
        <dbReference type="ChEBI" id="CHEBI:32966"/>
    </ligand>
</feature>
<feature type="site" description="Could play a key role in the communication between the regulatory and the substrate sites" evidence="1">
    <location>
        <position position="74"/>
    </location>
</feature>
<feature type="site" description="Could play a key role in the communication between the regulatory and the substrate sites" evidence="1">
    <location>
        <position position="113"/>
    </location>
</feature>
<keyword id="KW-0021">Allosteric enzyme</keyword>
<keyword id="KW-0067">ATP-binding</keyword>
<keyword id="KW-0119">Carbohydrate metabolism</keyword>
<keyword id="KW-0320">Glycogen biosynthesis</keyword>
<keyword id="KW-0321">Glycogen metabolism</keyword>
<keyword id="KW-0547">Nucleotide-binding</keyword>
<keyword id="KW-0548">Nucleotidyltransferase</keyword>
<keyword id="KW-0808">Transferase</keyword>
<comment type="function">
    <text evidence="1">Involved in the biosynthesis of ADP-glucose, a building block required for the elongation reactions to produce glycogen. Catalyzes the reaction between ATP and alpha-D-glucose 1-phosphate (G1P) to produce pyrophosphate and ADP-Glc.</text>
</comment>
<comment type="catalytic activity">
    <reaction evidence="1">
        <text>alpha-D-glucose 1-phosphate + ATP + H(+) = ADP-alpha-D-glucose + diphosphate</text>
        <dbReference type="Rhea" id="RHEA:12120"/>
        <dbReference type="ChEBI" id="CHEBI:15378"/>
        <dbReference type="ChEBI" id="CHEBI:30616"/>
        <dbReference type="ChEBI" id="CHEBI:33019"/>
        <dbReference type="ChEBI" id="CHEBI:57498"/>
        <dbReference type="ChEBI" id="CHEBI:58601"/>
        <dbReference type="EC" id="2.7.7.27"/>
    </reaction>
</comment>
<comment type="activity regulation">
    <text evidence="1">Allosterically activated by fructose-1,6-bisphosphate (F16BP) and inhibited by AMP.</text>
</comment>
<comment type="pathway">
    <text evidence="1">Glycan biosynthesis; glycogen biosynthesis.</text>
</comment>
<comment type="subunit">
    <text evidence="1">Homotetramer.</text>
</comment>
<comment type="similarity">
    <text evidence="1">Belongs to the bacterial/plant glucose-1-phosphate adenylyltransferase family.</text>
</comment>